<keyword id="KW-0134">Cell wall</keyword>
<keyword id="KW-0961">Cell wall biogenesis/degradation</keyword>
<keyword id="KW-0472">Membrane</keyword>
<keyword id="KW-0964">Secreted</keyword>
<name>EXPB1_PSEMZ</name>
<feature type="chain" id="PRO_0000397946" description="Expansin-B1">
    <location>
        <begin position="1" status="less than"/>
        <end position="28" status="greater than"/>
    </location>
</feature>
<feature type="domain" description="Expansin-like CBD" evidence="3">
    <location>
        <begin position="11" status="less than"/>
        <end position="28" status="greater than"/>
    </location>
</feature>
<feature type="non-consecutive residues" evidence="4">
    <location>
        <begin position="10"/>
        <end position="11"/>
    </location>
</feature>
<feature type="non-terminal residue" evidence="4">
    <location>
        <position position="1"/>
    </location>
</feature>
<feature type="non-terminal residue" evidence="4">
    <location>
        <position position="28"/>
    </location>
</feature>
<evidence type="ECO:0000250" key="1">
    <source>
        <dbReference type="UniProtKB" id="O24230"/>
    </source>
</evidence>
<evidence type="ECO:0000255" key="2"/>
<evidence type="ECO:0000255" key="3">
    <source>
        <dbReference type="PROSITE-ProRule" id="PRU00078"/>
    </source>
</evidence>
<evidence type="ECO:0000303" key="4">
    <source>
    </source>
</evidence>
<evidence type="ECO:0000305" key="5"/>
<comment type="function">
    <text evidence="1">May cause loosening and extension of plant cell walls by disrupting non-covalent bonding between cellulose microfibrils and matrix glucans.</text>
</comment>
<comment type="subcellular location">
    <subcellularLocation>
        <location evidence="1">Secreted</location>
        <location evidence="1">Cell wall</location>
    </subcellularLocation>
    <subcellularLocation>
        <location evidence="1">Membrane</location>
        <topology evidence="1">Peripheral membrane protein</topology>
    </subcellularLocation>
</comment>
<comment type="similarity">
    <text evidence="2">Belongs to the expansin family. Expansin B subfamily.</text>
</comment>
<reference evidence="5" key="1">
    <citation type="journal article" date="2008" name="J. Proteomics">
        <title>A proteomics approach to identify proteins differentially expressed in Douglas-fir seedlings infected by Phellinus sulphurascens.</title>
        <authorList>
            <person name="Islam M.A."/>
            <person name="Sturrock R.N."/>
            <person name="Ekramoddoullah A.K.M."/>
        </authorList>
    </citation>
    <scope>IDENTIFICATION BY MASS SPECTROMETRY</scope>
</reference>
<sequence>MAGASAKVVAMLLSLQGPXSLRMVSESG</sequence>
<protein>
    <recommendedName>
        <fullName evidence="1 4">Expansin-B1</fullName>
    </recommendedName>
    <alternativeName>
        <fullName evidence="1 4">Beta-expansin-1</fullName>
    </alternativeName>
</protein>
<accession>P85909</accession>
<proteinExistence type="evidence at protein level"/>
<dbReference type="GO" id="GO:0005576">
    <property type="term" value="C:extracellular region"/>
    <property type="evidence" value="ECO:0007669"/>
    <property type="project" value="UniProtKB-KW"/>
</dbReference>
<dbReference type="GO" id="GO:0016020">
    <property type="term" value="C:membrane"/>
    <property type="evidence" value="ECO:0007669"/>
    <property type="project" value="UniProtKB-SubCell"/>
</dbReference>
<dbReference type="GO" id="GO:0071555">
    <property type="term" value="P:cell wall organization"/>
    <property type="evidence" value="ECO:0007669"/>
    <property type="project" value="UniProtKB-KW"/>
</dbReference>
<organism>
    <name type="scientific">Pseudotsuga menziesii</name>
    <name type="common">Douglas-fir</name>
    <name type="synonym">Abies menziesii</name>
    <dbReference type="NCBI Taxonomy" id="3357"/>
    <lineage>
        <taxon>Eukaryota</taxon>
        <taxon>Viridiplantae</taxon>
        <taxon>Streptophyta</taxon>
        <taxon>Embryophyta</taxon>
        <taxon>Tracheophyta</taxon>
        <taxon>Spermatophyta</taxon>
        <taxon>Pinopsida</taxon>
        <taxon>Pinidae</taxon>
        <taxon>Conifers I</taxon>
        <taxon>Pinales</taxon>
        <taxon>Pinaceae</taxon>
        <taxon>Pseudotsuga</taxon>
    </lineage>
</organism>